<proteinExistence type="evidence at protein level"/>
<sequence>MGKPFTLSLSSLCLLLLSSACFAISSSKLNECQLNNLNALEPDHRVESEGGLIQTWNSQHPELKCAGVTVSKLTLNRNGLHLPSYSPYPRMIIIAQGKGALGVAIPGCPETFEEPQEQSNRRGSRSQKQQLQDSHQKIRHFNEGDVLVIPPGVPYWTYNTGDEPVVAISLLDTSNFNNQLDQTPRVFYLAGNPDIEYPETMQQQQQQKSHGGRKQGQHQQEEEEEGGSVLSGFSKHFLAQSFNTNEDIAEKLQSPDDERKQIVTVEGGLSVISPKWQEQQDEDEDEDEDDEDEQIPSHPPRRPSHGKREQDEDEDEDEDKPRPSRPSQGKREQDQDQDEDEDEDEDQPRKSREWRSKKTQPRRPRQEEPRERGCETRNGVEENICTLKLHENIARPSRADFYNPKAGRISTLNSLTLPALRQFQLSAQYVVLYKNGIYSPHWNLNANSVIYVTRGQGKVRVVNCQGNAVFDGELRRGQLLVVPQNFVVAEQAGEQGFEYIVFKTHHNAVTSYLKDVFRAIPSEVLAHSYNLRQSQVSELKYEGNWGPLVNPESQQGSPRVKVA</sequence>
<dbReference type="EMBL" id="X02626">
    <property type="protein sequence ID" value="CAA26478.1"/>
    <property type="molecule type" value="mRNA"/>
</dbReference>
<dbReference type="EMBL" id="X52863">
    <property type="protein sequence ID" value="CAA37044.1"/>
    <property type="molecule type" value="Genomic_DNA"/>
</dbReference>
<dbReference type="EMBL" id="AB004062">
    <property type="protein sequence ID" value="BAA74953.1"/>
    <property type="molecule type" value="Genomic_DNA"/>
</dbReference>
<dbReference type="EMBL" id="AB195712">
    <property type="protein sequence ID" value="BAD72975.1"/>
    <property type="molecule type" value="mRNA"/>
</dbReference>
<dbReference type="EMBL" id="CM000843">
    <property type="protein sequence ID" value="KRH32185.1"/>
    <property type="molecule type" value="Genomic_DNA"/>
</dbReference>
<dbReference type="EMBL" id="X05652">
    <property type="protein sequence ID" value="CAB57802.1"/>
    <property type="molecule type" value="mRNA"/>
</dbReference>
<dbReference type="PIR" id="A91145">
    <property type="entry name" value="FWSYG5"/>
</dbReference>
<dbReference type="PIR" id="JA0152">
    <property type="entry name" value="JA0152"/>
</dbReference>
<dbReference type="PIR" id="PQ0199">
    <property type="entry name" value="PQ0199"/>
</dbReference>
<dbReference type="PIR" id="S11004">
    <property type="entry name" value="S11004"/>
</dbReference>
<dbReference type="PIR" id="S20946">
    <property type="entry name" value="S20946"/>
</dbReference>
<dbReference type="RefSeq" id="NP_001235795.1">
    <property type="nucleotide sequence ID" value="NM_001248866.1"/>
</dbReference>
<dbReference type="RefSeq" id="NP_001238008.1">
    <molecule id="P02858-1"/>
    <property type="nucleotide sequence ID" value="NM_001251079.2"/>
</dbReference>
<dbReference type="SMR" id="P02858"/>
<dbReference type="FunCoup" id="P02858">
    <property type="interactions" value="92"/>
</dbReference>
<dbReference type="STRING" id="3847.P02858"/>
<dbReference type="Allergome" id="2541">
    <property type="allergen name" value="Gly m 6.0401"/>
</dbReference>
<dbReference type="Allergome" id="5821">
    <property type="allergen name" value="Gly m 6"/>
</dbReference>
<dbReference type="PaxDb" id="3847-GLYMA10G04280.1"/>
<dbReference type="EnsemblPlants" id="KRH32185">
    <molecule id="P02858-1"/>
    <property type="protein sequence ID" value="KRH32185"/>
    <property type="gene ID" value="GLYMA_10G037100"/>
</dbReference>
<dbReference type="GeneID" id="100101841"/>
<dbReference type="Gramene" id="KRH32185">
    <molecule id="P02858-1"/>
    <property type="protein sequence ID" value="KRH32185"/>
    <property type="gene ID" value="GLYMA_10G037100"/>
</dbReference>
<dbReference type="KEGG" id="gmx:100101841"/>
<dbReference type="eggNOG" id="ENOG502QU1J">
    <property type="taxonomic scope" value="Eukaryota"/>
</dbReference>
<dbReference type="HOGENOM" id="CLU_026341_2_0_1"/>
<dbReference type="InParanoid" id="P02858"/>
<dbReference type="OMA" id="FKTNHNA"/>
<dbReference type="OrthoDB" id="1903982at2759"/>
<dbReference type="Proteomes" id="UP000008827">
    <property type="component" value="Chromosome 10"/>
</dbReference>
<dbReference type="GO" id="GO:0005783">
    <property type="term" value="C:endoplasmic reticulum"/>
    <property type="evidence" value="ECO:0000250"/>
    <property type="project" value="UniProtKB"/>
</dbReference>
<dbReference type="GO" id="GO:0000326">
    <property type="term" value="C:protein storage vacuole"/>
    <property type="evidence" value="ECO:0000250"/>
    <property type="project" value="UniProtKB"/>
</dbReference>
<dbReference type="GO" id="GO:0045735">
    <property type="term" value="F:nutrient reservoir activity"/>
    <property type="evidence" value="ECO:0007669"/>
    <property type="project" value="UniProtKB-KW"/>
</dbReference>
<dbReference type="CDD" id="cd02243">
    <property type="entry name" value="cupin_11S_legumin_C"/>
    <property type="match status" value="1"/>
</dbReference>
<dbReference type="CDD" id="cd02242">
    <property type="entry name" value="cupin_11S_legumin_N"/>
    <property type="match status" value="1"/>
</dbReference>
<dbReference type="FunFam" id="2.60.120.10:FF:000073">
    <property type="entry name" value="Glycinin G1"/>
    <property type="match status" value="1"/>
</dbReference>
<dbReference type="FunFam" id="2.60.120.10:FF:000124">
    <property type="entry name" value="Glycinin G5"/>
    <property type="match status" value="1"/>
</dbReference>
<dbReference type="Gene3D" id="2.60.120.10">
    <property type="entry name" value="Jelly Rolls"/>
    <property type="match status" value="2"/>
</dbReference>
<dbReference type="InterPro" id="IPR022379">
    <property type="entry name" value="11S_seedstore_CS"/>
</dbReference>
<dbReference type="InterPro" id="IPR006044">
    <property type="entry name" value="11S_seedstore_pln"/>
</dbReference>
<dbReference type="InterPro" id="IPR006045">
    <property type="entry name" value="Cupin_1"/>
</dbReference>
<dbReference type="InterPro" id="IPR014710">
    <property type="entry name" value="RmlC-like_jellyroll"/>
</dbReference>
<dbReference type="InterPro" id="IPR011051">
    <property type="entry name" value="RmlC_Cupin_sf"/>
</dbReference>
<dbReference type="InterPro" id="IPR050253">
    <property type="entry name" value="Seed_Storage-Functional"/>
</dbReference>
<dbReference type="PANTHER" id="PTHR31189:SF63">
    <property type="entry name" value="GLYCININ G5"/>
    <property type="match status" value="1"/>
</dbReference>
<dbReference type="PANTHER" id="PTHR31189">
    <property type="entry name" value="OS03G0336100 PROTEIN-RELATED"/>
    <property type="match status" value="1"/>
</dbReference>
<dbReference type="Pfam" id="PF00190">
    <property type="entry name" value="Cupin_1"/>
    <property type="match status" value="2"/>
</dbReference>
<dbReference type="PRINTS" id="PR00439">
    <property type="entry name" value="11SGLOBULIN"/>
</dbReference>
<dbReference type="SMART" id="SM00835">
    <property type="entry name" value="Cupin_1"/>
    <property type="match status" value="2"/>
</dbReference>
<dbReference type="SUPFAM" id="SSF51182">
    <property type="entry name" value="RmlC-like cupins"/>
    <property type="match status" value="1"/>
</dbReference>
<dbReference type="PROSITE" id="PS00305">
    <property type="entry name" value="11S_SEED_STORAGE"/>
    <property type="match status" value="1"/>
</dbReference>
<gene>
    <name evidence="24" type="primary">GY4</name>
    <name evidence="25" type="ordered locus">Glyma10g04280</name>
</gene>
<accession>P02858</accession>
<accession>Q43452</accession>
<accession>Q9S9D0</accession>
<accession>Q9SB11</accession>
<reference key="1">
    <citation type="journal article" date="1985" name="Eur. J. Biochem.">
        <title>Glycinin A5A4B3 mRNA: cDNA cloning and nucleotide sequencing of a splitting storage protein subunit of soybean.</title>
        <authorList>
            <person name="Momma T."/>
            <person name="Negoro T."/>
            <person name="Hirano H."/>
            <person name="Matsumoto A."/>
            <person name="Udaka K."/>
            <person name="Fukazawa C."/>
        </authorList>
    </citation>
    <scope>NUCLEOTIDE SEQUENCE [MRNA] (ISOFORM 1)</scope>
    <source>
        <strain>cv. Bonminori</strain>
    </source>
</reference>
<reference key="2">
    <citation type="journal article" date="1985" name="FEBS Lett.">
        <title>The primary structures of the A4 and A5 subunits are highly homologous to that of the A3 subunit in the glycinin seed storage protein of soybean.</title>
        <authorList>
            <person name="Hirano H."/>
            <person name="Fukazawa C."/>
            <person name="Harada K."/>
        </authorList>
    </citation>
    <scope>PROTEIN SEQUENCE (A4/A5 SUBUNITS) (ISOFORM 1)</scope>
    <source>
        <strain>cv. Bonminori</strain>
    </source>
</reference>
<reference key="3">
    <citation type="journal article" date="1989" name="Plant Cell">
        <title>Characterization of the glycinin gene family in soybean.</title>
        <authorList>
            <person name="Nielsen N.C."/>
            <person name="Dickinson C.D."/>
            <person name="Cho T.-J."/>
            <person name="Thanh V.H."/>
            <person name="Scallon B.J."/>
            <person name="Fischer R.L."/>
            <person name="Sims T.L."/>
            <person name="Drews G.N."/>
            <person name="Goldberg R.B."/>
        </authorList>
    </citation>
    <scope>NUCLEOTIDE SEQUENCE (ISOFORM 2)</scope>
    <scope>FUNCTION</scope>
    <scope>TISSUE SPECIFICITY</scope>
    <scope>DEVELOPMENTAL STAGE</scope>
    <scope>GENE FAMILY</scope>
</reference>
<reference key="4">
    <citation type="journal article" date="1992" name="Plant Mol. Biol.">
        <title>Characterization of a Gy4 glycinin gene from soybean Glycine max cv. forrest.</title>
        <authorList>
            <person name="Xue Z.-T."/>
            <person name="Xu M.-L."/>
            <person name="Shen W."/>
            <person name="Zhuang N.-L."/>
            <person name="Hu W.-M."/>
            <person name="Shen S.C."/>
        </authorList>
    </citation>
    <scope>NUCLEOTIDE SEQUENCE [GENOMIC DNA]</scope>
    <source>
        <strain>cv. Forrest</strain>
        <tissue>Leaf</tissue>
    </source>
</reference>
<reference key="5">
    <citation type="submission" date="1997-05" db="EMBL/GenBank/DDBJ databases">
        <title>Cloning of A5A4B3 glycinin gene from soybean.</title>
        <authorList>
            <person name="Chen S."/>
            <person name="Arahira M."/>
            <person name="Fukazawa C."/>
        </authorList>
    </citation>
    <scope>NUCLEOTIDE SEQUENCE [GENOMIC DNA]</scope>
    <source>
        <tissue>Leaf</tissue>
    </source>
</reference>
<reference key="6">
    <citation type="submission" date="2004-11" db="EMBL/GenBank/DDBJ databases">
        <title>Glycine max glycinin A5A4B3 mRNA.</title>
        <authorList>
            <person name="Prak K."/>
            <person name="Maruyama N."/>
            <person name="Utsumi S."/>
        </authorList>
    </citation>
    <scope>NUCLEOTIDE SEQUENCE [MRNA] (ISOFORM 1)</scope>
</reference>
<reference key="7">
    <citation type="journal article" date="2010" name="Nature">
        <title>Genome sequence of the palaeopolyploid soybean.</title>
        <authorList>
            <person name="Schmutz J."/>
            <person name="Cannon S.B."/>
            <person name="Schlueter J."/>
            <person name="Ma J."/>
            <person name="Mitros T."/>
            <person name="Nelson W."/>
            <person name="Hyten D.L."/>
            <person name="Song Q."/>
            <person name="Thelen J.J."/>
            <person name="Cheng J."/>
            <person name="Xu D."/>
            <person name="Hellsten U."/>
            <person name="May G.D."/>
            <person name="Yu Y."/>
            <person name="Sakurai T."/>
            <person name="Umezawa T."/>
            <person name="Bhattacharyya M.K."/>
            <person name="Sandhu D."/>
            <person name="Valliyodan B."/>
            <person name="Lindquist E."/>
            <person name="Peto M."/>
            <person name="Grant D."/>
            <person name="Shu S."/>
            <person name="Goodstein D."/>
            <person name="Barry K."/>
            <person name="Futrell-Griggs M."/>
            <person name="Abernathy B."/>
            <person name="Du J."/>
            <person name="Tian Z."/>
            <person name="Zhu L."/>
            <person name="Gill N."/>
            <person name="Joshi T."/>
            <person name="Libault M."/>
            <person name="Sethuraman A."/>
            <person name="Zhang X.-C."/>
            <person name="Shinozaki K."/>
            <person name="Nguyen H.T."/>
            <person name="Wing R.A."/>
            <person name="Cregan P."/>
            <person name="Specht J."/>
            <person name="Grimwood J."/>
            <person name="Rokhsar D."/>
            <person name="Stacey G."/>
            <person name="Shoemaker R.C."/>
            <person name="Jackson S.A."/>
        </authorList>
    </citation>
    <scope>NUCLEOTIDE SEQUENCE [LARGE SCALE GENOMIC DNA]</scope>
    <source>
        <strain>cv. Williams 82</strain>
        <tissue>Callus</tissue>
    </source>
</reference>
<reference key="8">
    <citation type="journal article" date="1987" name="Mol. Gen. Genet.">
        <title>Characterization of a null-allele for the Gy4 glycinin gene from soybean.</title>
        <authorList>
            <person name="Scallon B.J."/>
            <person name="Dickinson C.D."/>
            <person name="Nielsen N.C."/>
        </authorList>
    </citation>
    <scope>NUCLEOTIDE SEQUENCE [MRNA] OF 181-386 (ISOFORM 1/2)</scope>
    <source>
        <strain>cv. CX635-1-1-1</strain>
    </source>
</reference>
<reference key="9">
    <citation type="journal article" date="2000" name="J. Biotechnol.">
        <title>The effect of pH on heat denaturation and gel forming properties of soy proteins.</title>
        <authorList>
            <person name="Renkema J.M."/>
            <person name="Lakemond C.M."/>
            <person name="de Jongh H.H."/>
            <person name="Gruppen H."/>
            <person name="van Vliet T."/>
        </authorList>
    </citation>
    <scope>BIOTECHNOLOGY</scope>
</reference>
<reference key="10">
    <citation type="journal article" date="2007" name="Plant Physiol. Biochem.">
        <title>Proteomic and genetic analysis of glycinin subunits of sixteen soybean genotypes.</title>
        <authorList>
            <person name="Natarajan S."/>
            <person name="Xu C."/>
            <person name="Bae H."/>
            <person name="Bailey B.A."/>
            <person name="Cregan P."/>
            <person name="Caperna T.J."/>
            <person name="Garrett W.M."/>
            <person name="Luthria D."/>
        </authorList>
    </citation>
    <scope>POLYMORPHISM</scope>
    <scope>IDENTIFICATION BY MASS SPECTROMETRY</scope>
</reference>
<reference key="11">
    <citation type="journal article" date="2009" name="J. Allergy Clin. Immunol.">
        <title>Soybean (Glycine max) allergy in Europe: Gly m 5 (beta-conglycinin) and Gly m 6 (glycinin) are potential diagnostic markers for severe allergic reactions to soy.</title>
        <authorList>
            <person name="Holzhauser T."/>
            <person name="Wackermann O."/>
            <person name="Ballmer-Weber B.K."/>
            <person name="Bindslev-Jensen C."/>
            <person name="Scibilia J."/>
            <person name="Perono-Garoffo L."/>
            <person name="Utsumi S."/>
            <person name="Poulsen L.K."/>
            <person name="Vieths S."/>
        </authorList>
    </citation>
    <scope>ALLERGEN</scope>
</reference>
<reference key="12">
    <citation type="journal article" date="2012" name="Int. J. Food Microbiol.">
        <title>In vitro and in situ antimicrobial action and mechanism of glycinin and its basic subunit.</title>
        <authorList>
            <person name="Sitohy M.Z."/>
            <person name="Mahgoub S.A."/>
            <person name="Osman A.O."/>
        </authorList>
    </citation>
    <scope>FUNCTION</scope>
    <scope>BIOTECHNOLOGY</scope>
</reference>
<reference key="13">
    <citation type="journal article" date="2012" name="Plant Physiol. Biochem.">
        <title>Global gene expression profiles in developing soybean seeds.</title>
        <authorList>
            <person name="Asakura T."/>
            <person name="Tamura T."/>
            <person name="Terauchi K."/>
            <person name="Narikawa T."/>
            <person name="Yagasaki K."/>
            <person name="Ishimaru Y."/>
            <person name="Abe K."/>
        </authorList>
    </citation>
    <scope>TISSUE SPECIFICITY</scope>
    <scope>DEVELOPMENTAL STAGE</scope>
</reference>
<reference key="14">
    <citation type="journal article" date="2013" name="Acta Crystallogr. F">
        <title>Purification, crystallization and preliminary crystallographic analysis of soybean mature glycinin A1bB2.</title>
        <authorList>
            <person name="Prak K."/>
            <person name="Mikami B."/>
            <person name="Itoh T."/>
            <person name="Fukuda T."/>
            <person name="Maruyama N."/>
            <person name="Utsumi S."/>
        </authorList>
    </citation>
    <scope>GENE FAMILY</scope>
    <scope>NOMENCLATURE</scope>
</reference>
<reference key="15">
    <citation type="journal article" date="2013" name="J. Sci. Food Agric.">
        <title>Epitopes from two soybean glycinin subunits are antigenic in pigs.</title>
        <authorList>
            <person name="Taliercio E."/>
            <person name="Kim S.W."/>
        </authorList>
    </citation>
    <scope>ALLERGEN</scope>
</reference>
<reference key="16">
    <citation type="journal article" date="2014" name="Crit. Rev. Food Sci. Nutr.">
        <title>Advances of research on glycinin and beta-conglycinin: a review of two major soybean allergenic proteins.</title>
        <authorList>
            <person name="Wang T."/>
            <person name="Qin G.-X."/>
            <person name="Sun Z.-W."/>
            <person name="Zhao Y."/>
        </authorList>
    </citation>
    <scope>ALLERGEN</scope>
    <scope>REVIEW</scope>
</reference>
<reference key="17">
    <citation type="journal article" date="2015" name="Innovative Food Sci. Emerg. Technol.">
        <title>Antibacterial activities and membrane permeability actions of glycinin basic peptide against Escherichia coli.</title>
        <authorList>
            <person name="Li Y.-Q."/>
            <person name="Sun X.-X."/>
            <person name="Feng J.-L."/>
            <person name="Mo H.-Z."/>
        </authorList>
    </citation>
    <scope>FUNCTION</scope>
    <scope>BIOTECHNOLOGY</scope>
</reference>
<reference key="18">
    <citation type="journal article" date="2016" name="Food Sci. Biotechnol.">
        <title>Effects of glycinin basic polypeptide on sensory and physicochemical properties of chilled pork.</title>
        <authorList>
            <person name="Li Y.-Q."/>
            <person name="Hao M."/>
            <person name="Yang J."/>
            <person name="Mo H.-Z."/>
        </authorList>
    </citation>
    <scope>BIOTECHNOLOGY</scope>
</reference>
<reference key="19">
    <citation type="journal article" date="2016" name="J. Sci. Food Agric.">
        <title>Thermal aggregation behaviour of soy protein: characteristics of different polypeptides and sub-units.</title>
        <authorList>
            <person name="He X.-T."/>
            <person name="Yuan D.-B."/>
            <person name="Wang J.-M."/>
            <person name="Yang X.-Q."/>
        </authorList>
    </citation>
    <scope>BIOTECHNOLOGY</scope>
</reference>
<reference key="20">
    <citation type="journal article" date="2017" name="J. Agric. Food Chem.">
        <title>Antibacterial actions of glycinin basic peptide against Escherichia coli.</title>
        <authorList>
            <person name="Zhao G.-P."/>
            <person name="Li Y.-Q."/>
            <person name="Sun G.-J."/>
            <person name="Mo H.-Z."/>
        </authorList>
    </citation>
    <scope>FUNCTION</scope>
    <scope>BIOTECHNOLOGY</scope>
</reference>
<reference key="21">
    <citation type="journal article" date="2017" name="J. Sci. Food Agric.">
        <title>The structural properties and antigenicity of soybean glycinin by glycation with xylose.</title>
        <authorList>
            <person name="Bu G."/>
            <person name="Zhu T."/>
            <person name="Chen F."/>
        </authorList>
    </citation>
    <scope>ALLERGEN</scope>
</reference>
<reference key="22">
    <citation type="journal article" date="2018" name="Food Chem.">
        <title>Peptides derived from in vitro gastrointestinal digestion of germinated soybean proteins inhibit human colon cancer cells proliferation and inflammation.</title>
        <authorList>
            <person name="Gonzalez-Montoya M."/>
            <person name="Hernandez-Ledesma B."/>
            <person name="Silvan J.M."/>
            <person name="Mora-Escobedo R."/>
            <person name="Martinez-Villaluenga C."/>
        </authorList>
    </citation>
    <scope>PTM</scope>
    <scope>BIOTECHNOLOGY</scope>
    <scope>IDENTIFICATION BY MASS SPECTROMETRY</scope>
</reference>
<reference key="23">
    <citation type="journal article" date="2018" name="Int. J. Mol. Sci.">
        <title>Bioactive peptides from germinated soybean with anti-diabetic potential by inhibition of dipeptidyl peptidase-IV, alpha-amylase, and alpha-glucosidase enzymes.</title>
        <authorList>
            <person name="Gonzalez-Montoya M."/>
            <person name="Hernandez-Ledesma B."/>
            <person name="Mora-Escobedo R."/>
            <person name="Martinez-Villaluenga C."/>
        </authorList>
    </citation>
    <scope>BIOTECHNOLOGY</scope>
    <scope>IDENTIFICATION BY MASS SPECTROMETRY</scope>
</reference>
<reference key="24">
    <citation type="journal article" date="2018" name="J. Agric. Food Chem.">
        <title>Soybean Glycinin- and beta-Conglycinin-Induced Intestinal Damage in Piglets via the p38/JNK/NF-kappaB Signaling Pathway.</title>
        <authorList>
            <person name="Peng C."/>
            <person name="Cao C."/>
            <person name="He M."/>
            <person name="Shu Y."/>
            <person name="Tang X."/>
            <person name="Wang Y."/>
            <person name="Zhang Y."/>
            <person name="Xia X."/>
            <person name="Li Y."/>
            <person name="Wu J."/>
        </authorList>
    </citation>
    <scope>ALLERGEN</scope>
</reference>
<reference key="25">
    <citation type="journal article" date="2018" name="J. Agric. Food Chem.">
        <title>Molecular Mechanism for Improving Emulsification Efficiency of Soy Glycinin by Glycation with Soy Soluble Polysaccharide.</title>
        <authorList>
            <person name="Peng X.Q."/>
            <person name="Xu Y.T."/>
            <person name="Liu T.X."/>
            <person name="Tang C.H."/>
        </authorList>
    </citation>
    <scope>BIOTECHNOLOGY</scope>
</reference>
<reference key="26">
    <citation type="journal article" date="2018" name="Vet. Immunol. Immunopathol.">
        <title>Acidic polypeptides A1a, A3 and A4 of Gly m 6 (glycinin) are allergenic for piglets.</title>
        <authorList>
            <person name="Zheng S."/>
            <person name="Qin G."/>
            <person name="Chen J."/>
            <person name="Zhang F."/>
        </authorList>
    </citation>
    <scope>ALLERGEN</scope>
</reference>
<reference key="27">
    <citation type="journal article" date="2019" name="Fish Shellfish Immunol.">
        <title>Effects of glycinin and beta-conglycinin on growth performance and intestinal health in juvenile Chinese mitten crabs (Eriocheir sinensis).</title>
        <authorList>
            <person name="Han F."/>
            <person name="Wang X."/>
            <person name="Guo J."/>
            <person name="Qi C."/>
            <person name="Xu C."/>
            <person name="Luo Y."/>
            <person name="Li E."/>
            <person name="Qin J.G."/>
            <person name="Chen L."/>
        </authorList>
    </citation>
    <scope>ALLERGEN</scope>
</reference>
<keyword id="KW-0020">Allergen</keyword>
<keyword id="KW-0025">Alternative splicing</keyword>
<keyword id="KW-0903">Direct protein sequencing</keyword>
<keyword id="KW-1015">Disulfide bond</keyword>
<keyword id="KW-0256">Endoplasmic reticulum</keyword>
<keyword id="KW-1185">Reference proteome</keyword>
<keyword id="KW-0708">Seed storage protein</keyword>
<keyword id="KW-0732">Signal</keyword>
<keyword id="KW-0758">Storage protein</keyword>
<keyword id="KW-0926">Vacuole</keyword>
<evidence type="ECO:0000250" key="1">
    <source>
        <dbReference type="UniProtKB" id="P04776"/>
    </source>
</evidence>
<evidence type="ECO:0000255" key="2"/>
<evidence type="ECO:0000256" key="3">
    <source>
        <dbReference type="SAM" id="MobiDB-lite"/>
    </source>
</evidence>
<evidence type="ECO:0000269" key="4">
    <source>
    </source>
</evidence>
<evidence type="ECO:0000269" key="5">
    <source>
    </source>
</evidence>
<evidence type="ECO:0000269" key="6">
    <source>
    </source>
</evidence>
<evidence type="ECO:0000269" key="7">
    <source>
    </source>
</evidence>
<evidence type="ECO:0000269" key="8">
    <source>
    </source>
</evidence>
<evidence type="ECO:0000269" key="9">
    <source>
    </source>
</evidence>
<evidence type="ECO:0000269" key="10">
    <source>
    </source>
</evidence>
<evidence type="ECO:0000269" key="11">
    <source>
    </source>
</evidence>
<evidence type="ECO:0000269" key="12">
    <source>
    </source>
</evidence>
<evidence type="ECO:0000269" key="13">
    <source>
    </source>
</evidence>
<evidence type="ECO:0000269" key="14">
    <source>
    </source>
</evidence>
<evidence type="ECO:0000269" key="15">
    <source>
    </source>
</evidence>
<evidence type="ECO:0000269" key="16">
    <source>
    </source>
</evidence>
<evidence type="ECO:0000269" key="17">
    <source>
    </source>
</evidence>
<evidence type="ECO:0000269" key="18">
    <source>
    </source>
</evidence>
<evidence type="ECO:0000269" key="19">
    <source>
    </source>
</evidence>
<evidence type="ECO:0000269" key="20">
    <source ref="17"/>
</evidence>
<evidence type="ECO:0000303" key="21">
    <source>
    </source>
</evidence>
<evidence type="ECO:0000303" key="22">
    <source>
    </source>
</evidence>
<evidence type="ECO:0000303" key="23">
    <source>
    </source>
</evidence>
<evidence type="ECO:0000303" key="24">
    <source>
    </source>
</evidence>
<evidence type="ECO:0000305" key="25"/>
<comment type="function">
    <text evidence="6 9 12 20">Glycinin is the major seed storage protein of soybean (PubMed:2485233). Glycinin basic peptides (GBPs), and, to a lower extent, glycinin exhibit antibacterial activity against Gram-negative and Gram-positive bacteria (e.g. L.monocytogenes, B.subtilis, E.coli and S.enteritidis) by forming pores and aggregating in transmembranes, leading to membrane permeability and, eventually, cell death (PubMed:22236762, PubMed:28590128, Ref.17).</text>
</comment>
<comment type="subunit">
    <text evidence="1">Hexamer; each subunit is composed of an acidic and a basic chain derived from a single precursor and linked by a disulfide bond.</text>
</comment>
<comment type="subcellular location">
    <subcellularLocation>
        <location evidence="1">Endoplasmic reticulum</location>
    </subcellularLocation>
    <subcellularLocation>
        <location evidence="1">Protein storage vacuole</location>
    </subcellularLocation>
    <text evidence="1">Hexamers are assembled in the endoplasmic reticulum and later sorted to the protein storage vacuoles.</text>
</comment>
<comment type="alternative products">
    <event type="alternative splicing"/>
    <isoform>
        <id>P02858-1</id>
        <name>1</name>
        <sequence type="displayed"/>
    </isoform>
    <isoform>
        <id>P02858-2</id>
        <name>2</name>
        <sequence type="described" ref="VSP_060145"/>
    </isoform>
</comment>
<comment type="tissue specificity">
    <text evidence="7 9">Exclusively in seeds during embryogenesis.</text>
</comment>
<comment type="developmental stage">
    <text evidence="7 9">Accumulates early during embryogenesis, but repressed late in seed development (PubMed:2485233). Progressive level increase from pod to full-size seed growth (PubMed:22245912).</text>
</comment>
<comment type="PTM">
    <text evidence="13">During soybean germination, seed storage proteins are hydrolyzed by protease/26S proteasome.</text>
</comment>
<comment type="allergen">
    <text evidence="5 8 11 14 15 18 23">Causes an allergic reaction in human and animals (e.g. rats, mouse and piglets); the acidic subunit is particularly allergenic (PubMed:18996574, PubMed:23426933, PubMed:24499064, PubMed:30078589). Binds to IgE of patients with severe allergic reactions (anaphylaxis) to soybean (PubMed:18996574). Allergy to soybean is most common for infants (usually appears at the age of three months) which frequently outgrow their soybean allergy by the age of two, but a severe soybean allergy can last a lifetime; various symptoms involve skin, gastrointestinal tract and respiratory tracts (PubMed:24499064). Damaged intestinal function in piglets is associated with glycinin-mediated perturbation of nuclear factor-kappa B (NF-kappaB), Jun N-terminal kinase (JNK) and p38 levels (PubMed:30139257). Juvenile Chinese mitten crabs (E.sinensis) supplemented with glycinin display impaired growth and altered intestinal health due to gut inflammation, reshaped community of gut microbiota and digestive dysfunction (PubMed:30300740). Ingredient processing methods to reduce soybean allergenicity but keeping its nutritional values have been developed, among them physical processing includes extrusion, high-pressure (&gt;300 MPa), heating (between 70 and 90 degrees Celsius), roasting, chemical processing includes ethanol extraction (55-76 percent between 70 and 80 degrees Celsius), in vitro glycation (e.g. with xylose at 55 degrees Celsius) and enzymatic hydrolysis with pepsin and trypsin, and biological processing includes fermentation with A.oryzae, S.cerevisiae, L.lactic subsplactis, B.subtilis, B.lactic and L.plantarum (PubMed:24499064, PubMed:27620509). Resistant to hydrolysis by papain, alcalase, and fungal protease (PubMed:24499064).</text>
</comment>
<comment type="biotechnology">
    <text evidence="4 6 10 12 13 16 17 19 20">Emulsification efficiency of glycinin is improved by degree-dependent glycation with soy soluble polysaccharide (SSPS) at 60 degrees Celsius in both the acidic (A) and basic (B) polypeptides as a result of subunit dissociation at the quaternary level (PubMed:30372068). Thermal treatment of soybean seed proteins leads to the aggregation of glycinin acidic and basic polypeptides (GAP and GBP, respectively) (PubMed:10867183, PubMed:25801436). GBP improve sensory properties of meat (e.g. pork) during chilled storage and inhibit bacterial growth (e.g. L.monocytogenes, B.subtilis, E.coli and S.enteritidis) (PubMed:22236762, PubMed:30263339). Antibacterial properties of the GBP antimicrobial peptides (AMPs) associated with no cytotoxicity on the viability of human embryonic kidney cells make them promising candidates as natural antibacterial agents (PubMed:22236762, PubMed:28590128, Ref.17). Fragmented peptides resulting from gastrointestinal digestion of germinated soybeans seem to have anticancer and anti-inflammatory actions on human colon cancer cells (e.g. Caco-2, HT-29, and HCT-116) and macrophages (LPS-stimulated RAW 264.7) (PubMed:29037738). Such peptides resulting from digested germinated soybeans exhibit also anti-diabetic potential by inhibiting dipeptidyl peptidase IV (DPP-IV), salivary alpha-amylase and intestinal alpha-glucosidase enzymes (PubMed:30249015).</text>
</comment>
<comment type="similarity">
    <text evidence="25">Belongs to the 11S seed storage protein (globulins) family.</text>
</comment>
<feature type="signal peptide" evidence="2">
    <location>
        <begin position="1"/>
        <end position="23"/>
    </location>
</feature>
<feature type="chain" id="PRO_0000032020" description="Glycinin A5 subunit">
    <location>
        <begin position="24"/>
        <end position="120"/>
    </location>
</feature>
<feature type="chain" id="PRO_0000032021" description="Glycinin A4 subunit">
    <location>
        <begin position="121"/>
        <end position="378"/>
    </location>
</feature>
<feature type="chain" id="PRO_0000032022" description="Glycinin B3 subunit">
    <location>
        <begin position="379"/>
        <end position="563"/>
    </location>
</feature>
<feature type="domain" description="Cupin type-1 1" evidence="2">
    <location>
        <begin position="37"/>
        <end position="250"/>
    </location>
</feature>
<feature type="domain" description="Cupin type-1 2" evidence="2">
    <location>
        <begin position="391"/>
        <end position="537"/>
    </location>
</feature>
<feature type="region of interest" description="Disordered" evidence="3">
    <location>
        <begin position="108"/>
        <end position="136"/>
    </location>
</feature>
<feature type="region of interest" description="Disordered" evidence="3">
    <location>
        <begin position="199"/>
        <end position="228"/>
    </location>
</feature>
<feature type="region of interest" description="Disordered" evidence="3">
    <location>
        <begin position="266"/>
        <end position="375"/>
    </location>
</feature>
<feature type="short sequence motif" description="Vacuolar targeting signal" evidence="1">
    <location>
        <begin position="551"/>
        <end position="563"/>
    </location>
</feature>
<feature type="compositionally biased region" description="Acidic residues" evidence="3">
    <location>
        <begin position="279"/>
        <end position="294"/>
    </location>
</feature>
<feature type="compositionally biased region" description="Acidic residues" evidence="3">
    <location>
        <begin position="335"/>
        <end position="346"/>
    </location>
</feature>
<feature type="compositionally biased region" description="Basic and acidic residues" evidence="3">
    <location>
        <begin position="347"/>
        <end position="356"/>
    </location>
</feature>
<feature type="compositionally biased region" description="Basic and acidic residues" evidence="3">
    <location>
        <begin position="364"/>
        <end position="375"/>
    </location>
</feature>
<feature type="disulfide bond" evidence="1">
    <location>
        <begin position="32"/>
        <end position="65"/>
    </location>
</feature>
<feature type="disulfide bond" description="Interchain (between A5 and B3 chains)" evidence="1">
    <location>
        <begin position="108"/>
        <end position="385"/>
    </location>
</feature>
<feature type="splice variant" id="VSP_060145" description="In isoform 2.">
    <original>QSQVSELKYEGNWGPLVNPESQQGSPRVK</original>
    <variation>RQQARQVKNNNPFSFLVPPKESQRRV</variation>
    <location>
        <begin position="533"/>
        <end position="561"/>
    </location>
</feature>
<feature type="sequence conflict" description="In Ref. 2; AA sequence." evidence="25" ref="2">
    <original>L</original>
    <variation>F</variation>
    <location>
        <position position="29"/>
    </location>
</feature>
<feature type="sequence conflict" description="In Ref. 4; CAA37044." evidence="25" ref="4">
    <original>S</original>
    <variation>F</variation>
    <location>
        <position position="48"/>
    </location>
</feature>
<feature type="sequence conflict" description="In Ref. 1; CAA26478." ref="1">
    <original>L</original>
    <variation>S</variation>
    <location>
        <position position="82"/>
    </location>
</feature>
<feature type="sequence conflict" description="In Ref. 2; AA sequence." evidence="25" ref="2">
    <original>S</original>
    <variation>L</variation>
    <location>
        <position position="86"/>
    </location>
</feature>
<feature type="sequence conflict" description="In Ref. 2; AA sequence." evidence="25" ref="2">
    <original>I</original>
    <variation>V</variation>
    <location>
        <position position="94"/>
    </location>
</feature>
<feature type="sequence conflict" description="In Ref. 2; AA sequence." evidence="25" ref="2">
    <original>LGV</original>
    <variation>IGM</variation>
    <location>
        <begin position="101"/>
        <end position="103"/>
    </location>
</feature>
<feature type="sequence conflict" description="In Ref. 4; CAA37044." evidence="25" ref="4">
    <original>GVAI</original>
    <variation>QCK</variation>
    <location>
        <begin position="102"/>
        <end position="105"/>
    </location>
</feature>
<feature type="sequence conflict" description="In Ref. 2; AA sequence." evidence="25" ref="2">
    <original>I</original>
    <variation>F</variation>
    <location>
        <position position="105"/>
    </location>
</feature>
<feature type="sequence conflict" description="In Ref. 2; AA sequence." evidence="25" ref="2">
    <original>E</original>
    <variation>Q</variation>
    <location>
        <position position="117"/>
    </location>
</feature>
<feature type="sequence conflict" description="In Ref. 1; CAA26478 and 2; AA sequence." ref="1 2">
    <original>G</original>
    <variation>S</variation>
    <location>
        <position position="152"/>
    </location>
</feature>
<feature type="sequence conflict" description="In Ref. 1; CAA26478 and 2; AA sequence." ref="1 2">
    <original>Q</original>
    <variation>E</variation>
    <location>
        <position position="253"/>
    </location>
</feature>
<feature type="sequence conflict" description="In Ref. 1; CAA26478 and 2; AA sequence." ref="1 2">
    <original>EQDQD</original>
    <variation>NKTG</variation>
    <location>
        <begin position="332"/>
        <end position="336"/>
    </location>
</feature>
<protein>
    <recommendedName>
        <fullName evidence="21 24">Glycinin G4</fullName>
        <shortName evidence="25">Glycinin 11S G4</shortName>
        <shortName evidence="22">Glycinin A5A4B3</shortName>
    </recommendedName>
    <allergenName evidence="25">Gly m 6</allergenName>
    <component>
        <recommendedName>
            <fullName evidence="21 22">Glycinin A5 subunit</fullName>
        </recommendedName>
    </component>
    <component>
        <recommendedName>
            <fullName evidence="21 22">Glycinin A4 subunit</fullName>
        </recommendedName>
    </component>
    <component>
        <recommendedName>
            <fullName evidence="21 22">Glycinin B3 subunit</fullName>
        </recommendedName>
    </component>
</protein>
<organism>
    <name type="scientific">Glycine max</name>
    <name type="common">Soybean</name>
    <name type="synonym">Glycine hispida</name>
    <dbReference type="NCBI Taxonomy" id="3847"/>
    <lineage>
        <taxon>Eukaryota</taxon>
        <taxon>Viridiplantae</taxon>
        <taxon>Streptophyta</taxon>
        <taxon>Embryophyta</taxon>
        <taxon>Tracheophyta</taxon>
        <taxon>Spermatophyta</taxon>
        <taxon>Magnoliopsida</taxon>
        <taxon>eudicotyledons</taxon>
        <taxon>Gunneridae</taxon>
        <taxon>Pentapetalae</taxon>
        <taxon>rosids</taxon>
        <taxon>fabids</taxon>
        <taxon>Fabales</taxon>
        <taxon>Fabaceae</taxon>
        <taxon>Papilionoideae</taxon>
        <taxon>50 kb inversion clade</taxon>
        <taxon>NPAAA clade</taxon>
        <taxon>indigoferoid/millettioid clade</taxon>
        <taxon>Phaseoleae</taxon>
        <taxon>Glycine</taxon>
        <taxon>Glycine subgen. Soja</taxon>
    </lineage>
</organism>
<name>GLYG4_SOYBN</name>